<feature type="chain" id="PRO_1000069903" description="Chromosome partition protein MukB">
    <location>
        <begin position="1"/>
        <end position="1486"/>
    </location>
</feature>
<feature type="region of interest" description="Flexible hinge" evidence="1">
    <location>
        <begin position="666"/>
        <end position="783"/>
    </location>
</feature>
<feature type="coiled-coil region" evidence="1">
    <location>
        <begin position="326"/>
        <end position="418"/>
    </location>
</feature>
<feature type="coiled-coil region" evidence="1">
    <location>
        <begin position="444"/>
        <end position="480"/>
    </location>
</feature>
<feature type="coiled-coil region" evidence="1">
    <location>
        <begin position="509"/>
        <end position="603"/>
    </location>
</feature>
<feature type="coiled-coil region" evidence="1">
    <location>
        <begin position="835"/>
        <end position="923"/>
    </location>
</feature>
<feature type="coiled-coil region" evidence="1">
    <location>
        <begin position="977"/>
        <end position="1115"/>
    </location>
</feature>
<feature type="coiled-coil region" evidence="1">
    <location>
        <begin position="1209"/>
        <end position="1266"/>
    </location>
</feature>
<feature type="binding site" evidence="1">
    <location>
        <begin position="34"/>
        <end position="41"/>
    </location>
    <ligand>
        <name>ATP</name>
        <dbReference type="ChEBI" id="CHEBI:30616"/>
    </ligand>
</feature>
<protein>
    <recommendedName>
        <fullName evidence="1">Chromosome partition protein MukB</fullName>
    </recommendedName>
    <alternativeName>
        <fullName evidence="1">Structural maintenance of chromosome-related protein</fullName>
    </alternativeName>
</protein>
<dbReference type="EMBL" id="CP000468">
    <property type="protein sequence ID" value="ABJ00341.1"/>
    <property type="molecule type" value="Genomic_DNA"/>
</dbReference>
<dbReference type="RefSeq" id="WP_000572616.1">
    <property type="nucleotide sequence ID" value="NZ_CADILS010000016.1"/>
</dbReference>
<dbReference type="SMR" id="A1A9K1"/>
<dbReference type="KEGG" id="ecv:APECO1_36"/>
<dbReference type="HOGENOM" id="CLU_004430_0_0_6"/>
<dbReference type="Proteomes" id="UP000008216">
    <property type="component" value="Chromosome"/>
</dbReference>
<dbReference type="GO" id="GO:0005737">
    <property type="term" value="C:cytoplasm"/>
    <property type="evidence" value="ECO:0007669"/>
    <property type="project" value="UniProtKB-UniRule"/>
</dbReference>
<dbReference type="GO" id="GO:0009295">
    <property type="term" value="C:nucleoid"/>
    <property type="evidence" value="ECO:0007669"/>
    <property type="project" value="UniProtKB-SubCell"/>
</dbReference>
<dbReference type="GO" id="GO:0005524">
    <property type="term" value="F:ATP binding"/>
    <property type="evidence" value="ECO:0007669"/>
    <property type="project" value="UniProtKB-UniRule"/>
</dbReference>
<dbReference type="GO" id="GO:0003677">
    <property type="term" value="F:DNA binding"/>
    <property type="evidence" value="ECO:0007669"/>
    <property type="project" value="UniProtKB-UniRule"/>
</dbReference>
<dbReference type="GO" id="GO:0051301">
    <property type="term" value="P:cell division"/>
    <property type="evidence" value="ECO:0007669"/>
    <property type="project" value="UniProtKB-KW"/>
</dbReference>
<dbReference type="GO" id="GO:0030261">
    <property type="term" value="P:chromosome condensation"/>
    <property type="evidence" value="ECO:0007669"/>
    <property type="project" value="UniProtKB-KW"/>
</dbReference>
<dbReference type="GO" id="GO:0007059">
    <property type="term" value="P:chromosome segregation"/>
    <property type="evidence" value="ECO:0007669"/>
    <property type="project" value="UniProtKB-UniRule"/>
</dbReference>
<dbReference type="GO" id="GO:0006260">
    <property type="term" value="P:DNA replication"/>
    <property type="evidence" value="ECO:0007669"/>
    <property type="project" value="UniProtKB-UniRule"/>
</dbReference>
<dbReference type="FunFam" id="1.20.58.850:FF:000001">
    <property type="entry name" value="Chromosome partition protein MukB"/>
    <property type="match status" value="1"/>
</dbReference>
<dbReference type="FunFam" id="3.30.70.3500:FF:000001">
    <property type="entry name" value="Chromosome partition protein MukB"/>
    <property type="match status" value="1"/>
</dbReference>
<dbReference type="FunFam" id="3.40.1140.10:FF:000001">
    <property type="entry name" value="Chromosome partition protein MukB"/>
    <property type="match status" value="1"/>
</dbReference>
<dbReference type="FunFam" id="3.40.1140.10:FF:000002">
    <property type="entry name" value="Chromosome partition protein MukB"/>
    <property type="match status" value="1"/>
</dbReference>
<dbReference type="Gene3D" id="1.10.287.1490">
    <property type="match status" value="1"/>
</dbReference>
<dbReference type="Gene3D" id="1.20.58.850">
    <property type="match status" value="1"/>
</dbReference>
<dbReference type="Gene3D" id="3.40.1140.10">
    <property type="match status" value="2"/>
</dbReference>
<dbReference type="Gene3D" id="1.20.5.420">
    <property type="entry name" value="Immunoglobulin FC, subunit C"/>
    <property type="match status" value="1"/>
</dbReference>
<dbReference type="Gene3D" id="3.30.70.3500">
    <property type="entry name" value="MukB, hinge domain"/>
    <property type="match status" value="1"/>
</dbReference>
<dbReference type="HAMAP" id="MF_01800">
    <property type="entry name" value="MukB"/>
    <property type="match status" value="1"/>
</dbReference>
<dbReference type="InterPro" id="IPR012090">
    <property type="entry name" value="MukB"/>
</dbReference>
<dbReference type="InterPro" id="IPR050308">
    <property type="entry name" value="MukB/SMC"/>
</dbReference>
<dbReference type="InterPro" id="IPR032520">
    <property type="entry name" value="MukB_hinge"/>
</dbReference>
<dbReference type="InterPro" id="IPR042501">
    <property type="entry name" value="MukB_hinge_sf"/>
</dbReference>
<dbReference type="InterPro" id="IPR007406">
    <property type="entry name" value="MukB_N_dom"/>
</dbReference>
<dbReference type="InterPro" id="IPR027417">
    <property type="entry name" value="P-loop_NTPase"/>
</dbReference>
<dbReference type="NCBIfam" id="NF003422">
    <property type="entry name" value="PRK04863.1"/>
    <property type="match status" value="1"/>
</dbReference>
<dbReference type="PANTHER" id="PTHR42963">
    <property type="entry name" value="CHROMOSOME PARTITION PROTEIN MUKB"/>
    <property type="match status" value="1"/>
</dbReference>
<dbReference type="PANTHER" id="PTHR42963:SF1">
    <property type="entry name" value="DUF4476 DOMAIN-CONTAINING PROTEIN"/>
    <property type="match status" value="1"/>
</dbReference>
<dbReference type="Pfam" id="PF04310">
    <property type="entry name" value="MukB"/>
    <property type="match status" value="1"/>
</dbReference>
<dbReference type="Pfam" id="PF16330">
    <property type="entry name" value="MukB_hinge"/>
    <property type="match status" value="1"/>
</dbReference>
<dbReference type="Pfam" id="PF13558">
    <property type="entry name" value="SbcC_Walker_B"/>
    <property type="match status" value="1"/>
</dbReference>
<dbReference type="PIRSF" id="PIRSF005246">
    <property type="entry name" value="MukB"/>
    <property type="match status" value="1"/>
</dbReference>
<dbReference type="SUPFAM" id="SSF52540">
    <property type="entry name" value="P-loop containing nucleoside triphosphate hydrolases"/>
    <property type="match status" value="2"/>
</dbReference>
<organism>
    <name type="scientific">Escherichia coli O1:K1 / APEC</name>
    <dbReference type="NCBI Taxonomy" id="405955"/>
    <lineage>
        <taxon>Bacteria</taxon>
        <taxon>Pseudomonadati</taxon>
        <taxon>Pseudomonadota</taxon>
        <taxon>Gammaproteobacteria</taxon>
        <taxon>Enterobacterales</taxon>
        <taxon>Enterobacteriaceae</taxon>
        <taxon>Escherichia</taxon>
    </lineage>
</organism>
<reference key="1">
    <citation type="journal article" date="2007" name="J. Bacteriol.">
        <title>The genome sequence of avian pathogenic Escherichia coli strain O1:K1:H7 shares strong similarities with human extraintestinal pathogenic E. coli genomes.</title>
        <authorList>
            <person name="Johnson T.J."/>
            <person name="Kariyawasam S."/>
            <person name="Wannemuehler Y."/>
            <person name="Mangiamele P."/>
            <person name="Johnson S.J."/>
            <person name="Doetkott C."/>
            <person name="Skyberg J.A."/>
            <person name="Lynne A.M."/>
            <person name="Johnson J.R."/>
            <person name="Nolan L.K."/>
        </authorList>
    </citation>
    <scope>NUCLEOTIDE SEQUENCE [LARGE SCALE GENOMIC DNA]</scope>
</reference>
<keyword id="KW-0067">ATP-binding</keyword>
<keyword id="KW-0131">Cell cycle</keyword>
<keyword id="KW-0132">Cell division</keyword>
<keyword id="KW-0159">Chromosome partition</keyword>
<keyword id="KW-0175">Coiled coil</keyword>
<keyword id="KW-0963">Cytoplasm</keyword>
<keyword id="KW-0226">DNA condensation</keyword>
<keyword id="KW-0238">DNA-binding</keyword>
<keyword id="KW-0547">Nucleotide-binding</keyword>
<keyword id="KW-1185">Reference proteome</keyword>
<evidence type="ECO:0000255" key="1">
    <source>
        <dbReference type="HAMAP-Rule" id="MF_01800"/>
    </source>
</evidence>
<name>MUKB_ECOK1</name>
<accession>A1A9K1</accession>
<sequence length="1486" mass="170193">MIERGKFRSLTLINWNGFFARTFDLDELVTTLSGGNGAGKSTTMAAFVTALIPDLTLLHFRNTTEAGATSGSRDKGLHGKLKAGVCYSMLDTINSHHQRVVVGVRLQQVAGRDRKVDIKPFAIQGLPMSVQPTQLVTETLNERQARVLPLNELKDKLEAMEGVQFKQFNSITDYHSLMFDLGIIARRLRSASDRSKFYRLIEASLYGGISSAITRSLRDYLLPENSGVRKAFQDMEAALRENRMTLEAIRVTQSDRDLFKHLISEATNYVAADYMRHANERRVHLDKALEFRRELHTSRKQLAAEQYKHVDMARELAEHNGAEGDLEADYQAASDHLNLVQTALRQQEKIERYEADLDELQIRLEEQNEVVAEAIERQEENEARAEAAELEVDELKSQLADYQQALDVQQTRAIQYNQAIAALNRAKELCHLPDLTADSAAEWLETFQAKELEATEKMLSLEQKMSMAQTAHSQFEQAYQLVVAINGPLARNEAWDVARELLREGVDQRHLAEQVQPLRMRLSELEQRLREQQEAERLLADFCKRQGKNFDIDELEALHQELEARIASLSDSVSNAREERMALRQEQEQLQSRIQSLMQRAPVWLAAQNSLNQLSEQCGEEFTSSQDVTEFLQQLLEREREAIVERDEVGARKNAVDEEIERLSQPGGSEDQRLNALAERFGGVLLSEIYDDVSLEDAPYFSALYGPSRHAIVVPDLSQVTEHLEGLTDCPEDLYLIEGDPQSFDDSVFSVDELEKAVVVKIADRQWRYSRFPEVPLFGRAARESRIESLHAEREVLSERFATLSFDVQKTQRLHQAFSRFIGSHLAVAFESDPEAEIRQLNSRRVELERALSNHENDNQQQRIQFEQAKEGVTALNRILPRLNLLADDSLADRVDEIRERLDEAQEAARFVQQFGNQLAKLEPIVSVLQSDPEQFEQLKEDYAYSQQMQRDARQQAFALTEVVQRRAHFSYSDSAEMLSGNSDLNEKLRERLEQAEAERTRAREALRGHAAQLNQYNQVLASLKSSYDTKKELLNDLQRELQDIGVRADSGAEERARIRRDELHAQLSNNRSRRNQLEKALTFCEAEMDNLTRKLRKLERDYFEMREQVVTAKAGWCAVMRMVKDNGVERRLHRRELAYLSADDLRSMSDKALGALRLAVADNEHLRDVLRMSEDPKRPERKIQFFVAVYQHLRERIRQDIIRTDDPVEAIEQMEIELSRLTEELTSREQKLAISSRSVANIIRKTIQREQNRIRMLNQGLQNVSFGQVNSVRLNVNVRETHAMLLDVLSEQHEQHQDLFNSNRLTFSEALAKLYQRLNPQIDMGQRTPQTIGEELLDYRNYLEMEVEVNRGSDGWLRAESGALSTGEAIGTGMSILVMVVQSWEDESRRLRGKDISPCRLLFLDEAARLDARSIATLFELCERLQMQLIIAAPENISPEKGTTYKLVRKVFQNTEHVHVVGLRGFAPQLPETLPGSDEAPSQAS</sequence>
<comment type="function">
    <text evidence="1">Plays a central role in chromosome condensation, segregation and cell cycle progression. Functions as a homodimer, which is essential for chromosome partition. Involved in negative DNA supercoiling in vivo, and by this means organize and compact chromosomes. May achieve or facilitate chromosome segregation by condensation DNA from both sides of a centrally located replisome during cell division.</text>
</comment>
<comment type="subunit">
    <text evidence="1">Homodimerization via its hinge domain. Binds to DNA via its C-terminal region. Interacts, and probably forms a ternary complex, with MukE and MukF via its C-terminal region. The complex formation is stimulated by calcium or magnesium. Interacts with tubulin-related protein FtsZ.</text>
</comment>
<comment type="subcellular location">
    <subcellularLocation>
        <location evidence="1">Cytoplasm</location>
        <location evidence="1">Nucleoid</location>
    </subcellularLocation>
    <text evidence="1">Restricted to the nucleoid region.</text>
</comment>
<comment type="domain">
    <text evidence="1">The hinge domain, which separates the large intramolecular coiled coil regions, allows the homodimerization, forming a V-shaped homodimer.</text>
</comment>
<comment type="similarity">
    <text evidence="1">Belongs to the SMC family. MukB subfamily.</text>
</comment>
<proteinExistence type="inferred from homology"/>
<gene>
    <name evidence="1" type="primary">mukB</name>
    <name type="ordered locus">Ecok1_08470</name>
    <name type="ORF">APECO1_36</name>
</gene>